<keyword id="KW-0997">Cell inner membrane</keyword>
<keyword id="KW-1003">Cell membrane</keyword>
<keyword id="KW-0201">Cytochrome c-type biogenesis</keyword>
<keyword id="KW-0472">Membrane</keyword>
<keyword id="KW-1185">Reference proteome</keyword>
<keyword id="KW-0812">Transmembrane</keyword>
<keyword id="KW-1133">Transmembrane helix</keyword>
<organism>
    <name type="scientific">Rhizobium meliloti (strain 1021)</name>
    <name type="common">Ensifer meliloti</name>
    <name type="synonym">Sinorhizobium meliloti</name>
    <dbReference type="NCBI Taxonomy" id="266834"/>
    <lineage>
        <taxon>Bacteria</taxon>
        <taxon>Pseudomonadati</taxon>
        <taxon>Pseudomonadota</taxon>
        <taxon>Alphaproteobacteria</taxon>
        <taxon>Hyphomicrobiales</taxon>
        <taxon>Rhizobiaceae</taxon>
        <taxon>Sinorhizobium/Ensifer group</taxon>
        <taxon>Sinorhizobium</taxon>
    </lineage>
</organism>
<name>CCMF_RHIME</name>
<protein>
    <recommendedName>
        <fullName>Cytochrome c-type biogenesis protein CycK</fullName>
    </recommendedName>
</protein>
<feature type="chain" id="PRO_0000201587" description="Cytochrome c-type biogenesis protein CycK">
    <location>
        <begin position="1"/>
        <end position="676"/>
    </location>
</feature>
<feature type="transmembrane region" description="Helical" evidence="1">
    <location>
        <begin position="8"/>
        <end position="28"/>
    </location>
</feature>
<feature type="transmembrane region" description="Helical" evidence="1">
    <location>
        <begin position="42"/>
        <end position="62"/>
    </location>
</feature>
<feature type="transmembrane region" description="Helical" evidence="1">
    <location>
        <begin position="94"/>
        <end position="114"/>
    </location>
</feature>
<feature type="transmembrane region" description="Helical" evidence="1">
    <location>
        <begin position="123"/>
        <end position="143"/>
    </location>
</feature>
<feature type="transmembrane region" description="Helical" evidence="1">
    <location>
        <begin position="175"/>
        <end position="195"/>
    </location>
</feature>
<feature type="transmembrane region" description="Helical" evidence="1">
    <location>
        <begin position="210"/>
        <end position="230"/>
    </location>
</feature>
<feature type="transmembrane region" description="Helical" evidence="1">
    <location>
        <begin position="233"/>
        <end position="253"/>
    </location>
</feature>
<feature type="transmembrane region" description="Helical" evidence="1">
    <location>
        <begin position="273"/>
        <end position="293"/>
    </location>
</feature>
<feature type="transmembrane region" description="Helical" evidence="1">
    <location>
        <begin position="311"/>
        <end position="331"/>
    </location>
</feature>
<feature type="transmembrane region" description="Helical" evidence="1">
    <location>
        <begin position="356"/>
        <end position="376"/>
    </location>
</feature>
<feature type="transmembrane region" description="Helical" evidence="1">
    <location>
        <begin position="393"/>
        <end position="413"/>
    </location>
</feature>
<feature type="transmembrane region" description="Helical" evidence="1">
    <location>
        <begin position="418"/>
        <end position="438"/>
    </location>
</feature>
<feature type="transmembrane region" description="Helical" evidence="1">
    <location>
        <begin position="445"/>
        <end position="465"/>
    </location>
</feature>
<feature type="transmembrane region" description="Helical" evidence="1">
    <location>
        <begin position="493"/>
        <end position="513"/>
    </location>
</feature>
<feature type="transmembrane region" description="Helical" evidence="1">
    <location>
        <begin position="617"/>
        <end position="637"/>
    </location>
</feature>
<feature type="sequence conflict" description="In Ref. 1; CAA57906." evidence="2" ref="1">
    <original>V</original>
    <variation>I</variation>
    <location>
        <position position="319"/>
    </location>
</feature>
<feature type="sequence conflict" description="In Ref. 1; CAA57906." evidence="2" ref="1">
    <original>H</original>
    <variation>R</variation>
    <location>
        <position position="658"/>
    </location>
</feature>
<accession>P45404</accession>
<dbReference type="EMBL" id="X82560">
    <property type="protein sequence ID" value="CAA57906.1"/>
    <property type="molecule type" value="Genomic_DNA"/>
</dbReference>
<dbReference type="EMBL" id="AL591688">
    <property type="protein sequence ID" value="CAC45591.1"/>
    <property type="molecule type" value="Genomic_DNA"/>
</dbReference>
<dbReference type="PIR" id="S54750">
    <property type="entry name" value="S54750"/>
</dbReference>
<dbReference type="RefSeq" id="NP_385125.1">
    <property type="nucleotide sequence ID" value="NC_003047.1"/>
</dbReference>
<dbReference type="RefSeq" id="WP_010968989.1">
    <property type="nucleotide sequence ID" value="NC_003047.1"/>
</dbReference>
<dbReference type="SMR" id="P45404"/>
<dbReference type="EnsemblBacteria" id="CAC45591">
    <property type="protein sequence ID" value="CAC45591"/>
    <property type="gene ID" value="SMc02363"/>
</dbReference>
<dbReference type="KEGG" id="sme:SMc02363"/>
<dbReference type="PATRIC" id="fig|266834.11.peg.2423"/>
<dbReference type="eggNOG" id="COG1138">
    <property type="taxonomic scope" value="Bacteria"/>
</dbReference>
<dbReference type="HOGENOM" id="CLU_015041_3_0_5"/>
<dbReference type="OrthoDB" id="9761451at2"/>
<dbReference type="Proteomes" id="UP000001976">
    <property type="component" value="Chromosome"/>
</dbReference>
<dbReference type="GO" id="GO:0005886">
    <property type="term" value="C:plasma membrane"/>
    <property type="evidence" value="ECO:0007669"/>
    <property type="project" value="UniProtKB-SubCell"/>
</dbReference>
<dbReference type="GO" id="GO:0020037">
    <property type="term" value="F:heme binding"/>
    <property type="evidence" value="ECO:0007669"/>
    <property type="project" value="InterPro"/>
</dbReference>
<dbReference type="GO" id="GO:0015232">
    <property type="term" value="F:heme transmembrane transporter activity"/>
    <property type="evidence" value="ECO:0007669"/>
    <property type="project" value="InterPro"/>
</dbReference>
<dbReference type="GO" id="GO:0017004">
    <property type="term" value="P:cytochrome complex assembly"/>
    <property type="evidence" value="ECO:0007669"/>
    <property type="project" value="UniProtKB-KW"/>
</dbReference>
<dbReference type="InterPro" id="IPR032523">
    <property type="entry name" value="CcmF_C"/>
</dbReference>
<dbReference type="InterPro" id="IPR002541">
    <property type="entry name" value="Cyt_c_assembly"/>
</dbReference>
<dbReference type="InterPro" id="IPR003567">
    <property type="entry name" value="Cyt_c_biogenesis"/>
</dbReference>
<dbReference type="InterPro" id="IPR003568">
    <property type="entry name" value="Cyt_c_biogenesis_CcmF"/>
</dbReference>
<dbReference type="NCBIfam" id="TIGR00353">
    <property type="entry name" value="nrfE"/>
    <property type="match status" value="1"/>
</dbReference>
<dbReference type="NCBIfam" id="NF007691">
    <property type="entry name" value="PRK10369.1"/>
    <property type="match status" value="1"/>
</dbReference>
<dbReference type="PANTHER" id="PTHR43653">
    <property type="entry name" value="CYTOCHROME C ASSEMBLY PROTEIN-RELATED"/>
    <property type="match status" value="1"/>
</dbReference>
<dbReference type="PANTHER" id="PTHR43653:SF1">
    <property type="entry name" value="CYTOCHROME C-TYPE BIOGENESIS PROTEIN CCMF"/>
    <property type="match status" value="1"/>
</dbReference>
<dbReference type="Pfam" id="PF16327">
    <property type="entry name" value="CcmF_C"/>
    <property type="match status" value="1"/>
</dbReference>
<dbReference type="Pfam" id="PF01578">
    <property type="entry name" value="Cytochrom_C_asm"/>
    <property type="match status" value="1"/>
</dbReference>
<dbReference type="PRINTS" id="PR01410">
    <property type="entry name" value="CCBIOGENESIS"/>
</dbReference>
<dbReference type="PRINTS" id="PR01411">
    <property type="entry name" value="CCMFBIOGNSIS"/>
</dbReference>
<comment type="function">
    <text>Required for the biogenesis of c-type cytochromes. Possible subunit of a heme lyase.</text>
</comment>
<comment type="subcellular location">
    <subcellularLocation>
        <location evidence="2">Cell inner membrane</location>
        <topology evidence="2">Multi-pass membrane protein</topology>
    </subcellularLocation>
</comment>
<comment type="similarity">
    <text evidence="2">Belongs to the CcmF/CycK/Ccl1/NrfE/CcsA family.</text>
</comment>
<evidence type="ECO:0000255" key="1"/>
<evidence type="ECO:0000305" key="2"/>
<reference key="1">
    <citation type="journal article" date="1995" name="Mol. Gen. Genet.">
        <title>The cycHJKL genes of Rhizobium meliloti involved in cytochrome c biogenesis are required for 'respiratory' nitrate reduction ex planta and for nitrogen fixation during symbiosis.</title>
        <authorList>
            <person name="Kereszt A."/>
            <person name="Slaska-Kiss K."/>
            <person name="Putnoky P."/>
            <person name="Banfalvi Z."/>
            <person name="Kondorosi A."/>
        </authorList>
    </citation>
    <scope>NUCLEOTIDE SEQUENCE [GENOMIC DNA]</scope>
    <source>
        <strain>AK631</strain>
    </source>
</reference>
<reference key="2">
    <citation type="journal article" date="2001" name="Proc. Natl. Acad. Sci. U.S.A.">
        <title>Analysis of the chromosome sequence of the legume symbiont Sinorhizobium meliloti strain 1021.</title>
        <authorList>
            <person name="Capela D."/>
            <person name="Barloy-Hubler F."/>
            <person name="Gouzy J."/>
            <person name="Bothe G."/>
            <person name="Ampe F."/>
            <person name="Batut J."/>
            <person name="Boistard P."/>
            <person name="Becker A."/>
            <person name="Boutry M."/>
            <person name="Cadieu E."/>
            <person name="Dreano S."/>
            <person name="Gloux S."/>
            <person name="Godrie T."/>
            <person name="Goffeau A."/>
            <person name="Kahn D."/>
            <person name="Kiss E."/>
            <person name="Lelaure V."/>
            <person name="Masuy D."/>
            <person name="Pohl T."/>
            <person name="Portetelle D."/>
            <person name="Puehler A."/>
            <person name="Purnelle B."/>
            <person name="Ramsperger U."/>
            <person name="Renard C."/>
            <person name="Thebault P."/>
            <person name="Vandenbol M."/>
            <person name="Weidner S."/>
            <person name="Galibert F."/>
        </authorList>
    </citation>
    <scope>NUCLEOTIDE SEQUENCE [LARGE SCALE GENOMIC DNA]</scope>
    <source>
        <strain>1021</strain>
    </source>
</reference>
<reference key="3">
    <citation type="journal article" date="2001" name="Science">
        <title>The composite genome of the legume symbiont Sinorhizobium meliloti.</title>
        <authorList>
            <person name="Galibert F."/>
            <person name="Finan T.M."/>
            <person name="Long S.R."/>
            <person name="Puehler A."/>
            <person name="Abola P."/>
            <person name="Ampe F."/>
            <person name="Barloy-Hubler F."/>
            <person name="Barnett M.J."/>
            <person name="Becker A."/>
            <person name="Boistard P."/>
            <person name="Bothe G."/>
            <person name="Boutry M."/>
            <person name="Bowser L."/>
            <person name="Buhrmester J."/>
            <person name="Cadieu E."/>
            <person name="Capela D."/>
            <person name="Chain P."/>
            <person name="Cowie A."/>
            <person name="Davis R.W."/>
            <person name="Dreano S."/>
            <person name="Federspiel N.A."/>
            <person name="Fisher R.F."/>
            <person name="Gloux S."/>
            <person name="Godrie T."/>
            <person name="Goffeau A."/>
            <person name="Golding B."/>
            <person name="Gouzy J."/>
            <person name="Gurjal M."/>
            <person name="Hernandez-Lucas I."/>
            <person name="Hong A."/>
            <person name="Huizar L."/>
            <person name="Hyman R.W."/>
            <person name="Jones T."/>
            <person name="Kahn D."/>
            <person name="Kahn M.L."/>
            <person name="Kalman S."/>
            <person name="Keating D.H."/>
            <person name="Kiss E."/>
            <person name="Komp C."/>
            <person name="Lelaure V."/>
            <person name="Masuy D."/>
            <person name="Palm C."/>
            <person name="Peck M.C."/>
            <person name="Pohl T.M."/>
            <person name="Portetelle D."/>
            <person name="Purnelle B."/>
            <person name="Ramsperger U."/>
            <person name="Surzycki R."/>
            <person name="Thebault P."/>
            <person name="Vandenbol M."/>
            <person name="Vorhoelter F.J."/>
            <person name="Weidner S."/>
            <person name="Wells D.H."/>
            <person name="Wong K."/>
            <person name="Yeh K.-C."/>
            <person name="Batut J."/>
        </authorList>
    </citation>
    <scope>NUCLEOTIDE SEQUENCE [LARGE SCALE GENOMIC DNA]</scope>
    <source>
        <strain>1021</strain>
    </source>
</reference>
<sequence length="676" mass="72611">MIIELGHYALVLALATAIIQGVLPVLGVRRGDPSLMGLAANAALVCFLLVAFSFAVLTFAYVTSDFSVKNVWENSHSLKPLIYKITGVWGNHEGSMLLWLLILVFFSAMVALFGRNLPETLKANVLAVQAWIATAFAFFVLLTSNPFARLVPAPGEGRDLNPVLQDIGLAIHPPLLYLGYVGFSVCFSFAVAALIEGRIDAAWARWVRPWTLAAWTFLTAGIAMGSYWAYYELGWGGWWFWDPVENASFMPWLAGTALLHSALVMEKREALKIWTVLLAIMTFSLSLLGTFLVRSGVLTSVHAFATDPTRGVFILAILVVFIGGAFSLFAFRASHLKAGGIFAPVSREGALVVNNLILTTATATVLTGTLYPLVLEALTGDKISVGAPFFNMTFGLLMLPLIAVVPFGPLLAWKRGDLAGAAQRLFAAAALGLLAAAICYYAVNGGPVLAPFGLGLGVYLILGALTDLVLRSGLGKVAAGVAWRRLSGLPRSAFGTALAHIGLGITLIGIVTVTAFETETVVEMKPGAVVDVGRYSLRFDGMREGRGPNYTEDAGHFTVSRGGVEVTEIWSSKRLYSARRMPTTEAGIRTFGLSQLYVSLGDDMADGGIVVRIWWKPLILCIWGGALVMMAGGVVSLSDRRLRVGAPARARKALALDHDDFRSDRPKIINVIDSKG</sequence>
<gene>
    <name type="primary">cycK</name>
    <name type="ordered locus">R01019</name>
    <name type="ORF">SMc02363</name>
</gene>
<proteinExistence type="inferred from homology"/>